<organism>
    <name type="scientific">Agrobacterium fabrum (strain C58 / ATCC 33970)</name>
    <name type="common">Agrobacterium tumefaciens (strain C58)</name>
    <dbReference type="NCBI Taxonomy" id="176299"/>
    <lineage>
        <taxon>Bacteria</taxon>
        <taxon>Pseudomonadati</taxon>
        <taxon>Pseudomonadota</taxon>
        <taxon>Alphaproteobacteria</taxon>
        <taxon>Hyphomicrobiales</taxon>
        <taxon>Rhizobiaceae</taxon>
        <taxon>Rhizobium/Agrobacterium group</taxon>
        <taxon>Agrobacterium</taxon>
        <taxon>Agrobacterium tumefaciens complex</taxon>
    </lineage>
</organism>
<sequence length="262" mass="27849">MRALAIAATGMDAQQTNLEVIANNIANINTTGYKRARAEFTDLLYQTERMQGVPNRANQAIVPEGANIGLGVQTSAVRNIHTQGNLIETGNKLDVAIIGQGWFQIEAADGSTLYSRAGAFNKNADGNLVTVDGYNVIPNINIPTDAQDITITRTGQVTARIGNAADFTQLGQLTIANFANEAGLKPLGDNLFSQTPASGAPVVGVPDDPSYGYVKQSYLEGSNVDAVKEITDLITAQRAYEMNSKVITTADEMASIVSKNLK</sequence>
<name>FLGG_AGRFC</name>
<evidence type="ECO:0000250" key="1"/>
<evidence type="ECO:0000305" key="2"/>
<protein>
    <recommendedName>
        <fullName>Flagellar basal-body rod protein FlgG</fullName>
    </recommendedName>
    <alternativeName>
        <fullName>Distal rod protein</fullName>
    </alternativeName>
</protein>
<reference key="1">
    <citation type="journal article" date="1997" name="Gene">
        <title>Isolation and characterisation of a linked cluster of genes from Agrobacterium tumefaciens encoding proteins involved in flagellar basal-body structure.</title>
        <authorList>
            <person name="Deakin W.J."/>
            <person name="Furniss C.S."/>
            <person name="Parker V.E."/>
            <person name="Shaw C.H."/>
        </authorList>
    </citation>
    <scope>NUCLEOTIDE SEQUENCE [GENOMIC DNA]</scope>
</reference>
<reference key="2">
    <citation type="journal article" date="2001" name="Science">
        <title>The genome of the natural genetic engineer Agrobacterium tumefaciens C58.</title>
        <authorList>
            <person name="Wood D.W."/>
            <person name="Setubal J.C."/>
            <person name="Kaul R."/>
            <person name="Monks D.E."/>
            <person name="Kitajima J.P."/>
            <person name="Okura V.K."/>
            <person name="Zhou Y."/>
            <person name="Chen L."/>
            <person name="Wood G.E."/>
            <person name="Almeida N.F. Jr."/>
            <person name="Woo L."/>
            <person name="Chen Y."/>
            <person name="Paulsen I.T."/>
            <person name="Eisen J.A."/>
            <person name="Karp P.D."/>
            <person name="Bovee D. Sr."/>
            <person name="Chapman P."/>
            <person name="Clendenning J."/>
            <person name="Deatherage G."/>
            <person name="Gillet W."/>
            <person name="Grant C."/>
            <person name="Kutyavin T."/>
            <person name="Levy R."/>
            <person name="Li M.-J."/>
            <person name="McClelland E."/>
            <person name="Palmieri A."/>
            <person name="Raymond C."/>
            <person name="Rouse G."/>
            <person name="Saenphimmachak C."/>
            <person name="Wu Z."/>
            <person name="Romero P."/>
            <person name="Gordon D."/>
            <person name="Zhang S."/>
            <person name="Yoo H."/>
            <person name="Tao Y."/>
            <person name="Biddle P."/>
            <person name="Jung M."/>
            <person name="Krespan W."/>
            <person name="Perry M."/>
            <person name="Gordon-Kamm B."/>
            <person name="Liao L."/>
            <person name="Kim S."/>
            <person name="Hendrick C."/>
            <person name="Zhao Z.-Y."/>
            <person name="Dolan M."/>
            <person name="Chumley F."/>
            <person name="Tingey S.V."/>
            <person name="Tomb J.-F."/>
            <person name="Gordon M.P."/>
            <person name="Olson M.V."/>
            <person name="Nester E.W."/>
        </authorList>
    </citation>
    <scope>NUCLEOTIDE SEQUENCE [LARGE SCALE GENOMIC DNA]</scope>
    <source>
        <strain>C58 / ATCC 33970</strain>
    </source>
</reference>
<reference key="3">
    <citation type="journal article" date="2001" name="Science">
        <title>Genome sequence of the plant pathogen and biotechnology agent Agrobacterium tumefaciens C58.</title>
        <authorList>
            <person name="Goodner B."/>
            <person name="Hinkle G."/>
            <person name="Gattung S."/>
            <person name="Miller N."/>
            <person name="Blanchard M."/>
            <person name="Qurollo B."/>
            <person name="Goldman B.S."/>
            <person name="Cao Y."/>
            <person name="Askenazi M."/>
            <person name="Halling C."/>
            <person name="Mullin L."/>
            <person name="Houmiel K."/>
            <person name="Gordon J."/>
            <person name="Vaudin M."/>
            <person name="Iartchouk O."/>
            <person name="Epp A."/>
            <person name="Liu F."/>
            <person name="Wollam C."/>
            <person name="Allinger M."/>
            <person name="Doughty D."/>
            <person name="Scott C."/>
            <person name="Lappas C."/>
            <person name="Markelz B."/>
            <person name="Flanagan C."/>
            <person name="Crowell C."/>
            <person name="Gurson J."/>
            <person name="Lomo C."/>
            <person name="Sear C."/>
            <person name="Strub G."/>
            <person name="Cielo C."/>
            <person name="Slater S."/>
        </authorList>
    </citation>
    <scope>NUCLEOTIDE SEQUENCE [LARGE SCALE GENOMIC DNA]</scope>
    <source>
        <strain>C58 / ATCC 33970</strain>
    </source>
</reference>
<dbReference type="EMBL" id="U39941">
    <property type="protein sequence ID" value="AAB68968.1"/>
    <property type="molecule type" value="Genomic_DNA"/>
</dbReference>
<dbReference type="EMBL" id="U95165">
    <property type="protein sequence ID" value="AAB71790.1"/>
    <property type="molecule type" value="Genomic_DNA"/>
</dbReference>
<dbReference type="EMBL" id="AE007869">
    <property type="protein sequence ID" value="AAK86364.1"/>
    <property type="molecule type" value="Genomic_DNA"/>
</dbReference>
<dbReference type="PIR" id="AC2644">
    <property type="entry name" value="AC2644"/>
</dbReference>
<dbReference type="PIR" id="C97426">
    <property type="entry name" value="C97426"/>
</dbReference>
<dbReference type="RefSeq" id="NP_353579.1">
    <property type="nucleotide sequence ID" value="NC_003062.2"/>
</dbReference>
<dbReference type="RefSeq" id="WP_006313016.1">
    <property type="nucleotide sequence ID" value="NC_003062.2"/>
</dbReference>
<dbReference type="SMR" id="Q44338"/>
<dbReference type="STRING" id="176299.Atu0552"/>
<dbReference type="EnsemblBacteria" id="AAK86364">
    <property type="protein sequence ID" value="AAK86364"/>
    <property type="gene ID" value="Atu0552"/>
</dbReference>
<dbReference type="GeneID" id="1132590"/>
<dbReference type="KEGG" id="atu:Atu0552"/>
<dbReference type="PATRIC" id="fig|176299.10.peg.548"/>
<dbReference type="eggNOG" id="COG4786">
    <property type="taxonomic scope" value="Bacteria"/>
</dbReference>
<dbReference type="HOGENOM" id="CLU_013687_0_1_5"/>
<dbReference type="OrthoDB" id="9804559at2"/>
<dbReference type="PhylomeDB" id="Q44338"/>
<dbReference type="BioCyc" id="AGRO:ATU0552-MONOMER"/>
<dbReference type="Proteomes" id="UP000000813">
    <property type="component" value="Chromosome circular"/>
</dbReference>
<dbReference type="GO" id="GO:0009425">
    <property type="term" value="C:bacterial-type flagellum basal body"/>
    <property type="evidence" value="ECO:0000303"/>
    <property type="project" value="PAMGO_GAT"/>
</dbReference>
<dbReference type="GO" id="GO:0009426">
    <property type="term" value="C:bacterial-type flagellum basal body, distal rod"/>
    <property type="evidence" value="ECO:0007669"/>
    <property type="project" value="InterPro"/>
</dbReference>
<dbReference type="GO" id="GO:0071978">
    <property type="term" value="P:bacterial-type flagellum-dependent swarming motility"/>
    <property type="evidence" value="ECO:0007669"/>
    <property type="project" value="TreeGrafter"/>
</dbReference>
<dbReference type="InterPro" id="IPR001444">
    <property type="entry name" value="Flag_bb_rod_N"/>
</dbReference>
<dbReference type="InterPro" id="IPR019776">
    <property type="entry name" value="Flagellar_basal_body_rod_CS"/>
</dbReference>
<dbReference type="InterPro" id="IPR020013">
    <property type="entry name" value="Flagellar_FlgE/F/G"/>
</dbReference>
<dbReference type="InterPro" id="IPR010930">
    <property type="entry name" value="Flg_bb/hook_C_dom"/>
</dbReference>
<dbReference type="InterPro" id="IPR037925">
    <property type="entry name" value="FlgE/F/G-like"/>
</dbReference>
<dbReference type="InterPro" id="IPR012834">
    <property type="entry name" value="FlgG_G_neg"/>
</dbReference>
<dbReference type="InterPro" id="IPR053967">
    <property type="entry name" value="LlgE_F_G-like_D1"/>
</dbReference>
<dbReference type="NCBIfam" id="TIGR03506">
    <property type="entry name" value="FlgEFG_subfam"/>
    <property type="match status" value="2"/>
</dbReference>
<dbReference type="NCBIfam" id="TIGR02488">
    <property type="entry name" value="flgG_G_neg"/>
    <property type="match status" value="1"/>
</dbReference>
<dbReference type="PANTHER" id="PTHR30435:SF19">
    <property type="entry name" value="FLAGELLAR BASAL-BODY ROD PROTEIN FLGG"/>
    <property type="match status" value="1"/>
</dbReference>
<dbReference type="PANTHER" id="PTHR30435">
    <property type="entry name" value="FLAGELLAR PROTEIN"/>
    <property type="match status" value="1"/>
</dbReference>
<dbReference type="Pfam" id="PF00460">
    <property type="entry name" value="Flg_bb_rod"/>
    <property type="match status" value="1"/>
</dbReference>
<dbReference type="Pfam" id="PF06429">
    <property type="entry name" value="Flg_bbr_C"/>
    <property type="match status" value="1"/>
</dbReference>
<dbReference type="Pfam" id="PF22692">
    <property type="entry name" value="LlgE_F_G_D1"/>
    <property type="match status" value="1"/>
</dbReference>
<dbReference type="SUPFAM" id="SSF117143">
    <property type="entry name" value="Flagellar hook protein flgE"/>
    <property type="match status" value="1"/>
</dbReference>
<dbReference type="PROSITE" id="PS00588">
    <property type="entry name" value="FLAGELLA_BB_ROD"/>
    <property type="match status" value="1"/>
</dbReference>
<accession>Q44338</accession>
<gene>
    <name type="primary">flgG</name>
    <name type="ordered locus">Atu0552</name>
    <name type="ORF">AGR_C_972</name>
</gene>
<proteinExistence type="inferred from homology"/>
<comment type="subunit">
    <text evidence="1">The basal body constitutes a major portion of the flagellar organelle and consists of four rings (L,P,S, and M) mounted on a central rod. The rod consists of about 26 subunits of FlgG in the distal portion, and FlgB, FlgC and FlgF are thought to build up the proximal portion of the rod with about 6 subunits each (By similarity).</text>
</comment>
<comment type="subcellular location">
    <subcellularLocation>
        <location evidence="1">Bacterial flagellum basal body</location>
    </subcellularLocation>
</comment>
<comment type="similarity">
    <text evidence="2">Belongs to the flagella basal body rod proteins family.</text>
</comment>
<keyword id="KW-0975">Bacterial flagellum</keyword>
<keyword id="KW-1185">Reference proteome</keyword>
<feature type="chain" id="PRO_0000180842" description="Flagellar basal-body rod protein FlgG">
    <location>
        <begin position="1"/>
        <end position="262"/>
    </location>
</feature>
<feature type="sequence conflict" description="In Ref. 1; AAB68968." evidence="2" ref="1">
    <original>QIEAADGSTLYS</original>
    <variation>PDRGRRWFDALQ</variation>
    <location>
        <begin position="104"/>
        <end position="115"/>
    </location>
</feature>